<keyword id="KW-0067">ATP-binding</keyword>
<keyword id="KW-0319">Glycerol metabolism</keyword>
<keyword id="KW-0418">Kinase</keyword>
<keyword id="KW-0547">Nucleotide-binding</keyword>
<keyword id="KW-1185">Reference proteome</keyword>
<keyword id="KW-0808">Transferase</keyword>
<organism>
    <name type="scientific">Stenotrophomonas maltophilia (strain K279a)</name>
    <dbReference type="NCBI Taxonomy" id="522373"/>
    <lineage>
        <taxon>Bacteria</taxon>
        <taxon>Pseudomonadati</taxon>
        <taxon>Pseudomonadota</taxon>
        <taxon>Gammaproteobacteria</taxon>
        <taxon>Lysobacterales</taxon>
        <taxon>Lysobacteraceae</taxon>
        <taxon>Stenotrophomonas</taxon>
        <taxon>Stenotrophomonas maltophilia group</taxon>
    </lineage>
</organism>
<protein>
    <recommendedName>
        <fullName evidence="1">Glycerol kinase</fullName>
        <ecNumber evidence="1">2.7.1.30</ecNumber>
    </recommendedName>
    <alternativeName>
        <fullName evidence="1">ATP:glycerol 3-phosphotransferase</fullName>
    </alternativeName>
    <alternativeName>
        <fullName evidence="1">Glycerokinase</fullName>
        <shortName evidence="1">GK</shortName>
    </alternativeName>
</protein>
<accession>B2FI02</accession>
<feature type="chain" id="PRO_1000124204" description="Glycerol kinase">
    <location>
        <begin position="1"/>
        <end position="499"/>
    </location>
</feature>
<feature type="binding site" evidence="1">
    <location>
        <position position="13"/>
    </location>
    <ligand>
        <name>ADP</name>
        <dbReference type="ChEBI" id="CHEBI:456216"/>
    </ligand>
</feature>
<feature type="binding site" evidence="1">
    <location>
        <position position="13"/>
    </location>
    <ligand>
        <name>ATP</name>
        <dbReference type="ChEBI" id="CHEBI:30616"/>
    </ligand>
</feature>
<feature type="binding site" evidence="1">
    <location>
        <position position="13"/>
    </location>
    <ligand>
        <name>sn-glycerol 3-phosphate</name>
        <dbReference type="ChEBI" id="CHEBI:57597"/>
    </ligand>
</feature>
<feature type="binding site" evidence="1">
    <location>
        <position position="14"/>
    </location>
    <ligand>
        <name>ATP</name>
        <dbReference type="ChEBI" id="CHEBI:30616"/>
    </ligand>
</feature>
<feature type="binding site" evidence="1">
    <location>
        <position position="15"/>
    </location>
    <ligand>
        <name>ATP</name>
        <dbReference type="ChEBI" id="CHEBI:30616"/>
    </ligand>
</feature>
<feature type="binding site" evidence="1">
    <location>
        <position position="17"/>
    </location>
    <ligand>
        <name>ADP</name>
        <dbReference type="ChEBI" id="CHEBI:456216"/>
    </ligand>
</feature>
<feature type="binding site" evidence="1">
    <location>
        <position position="83"/>
    </location>
    <ligand>
        <name>glycerol</name>
        <dbReference type="ChEBI" id="CHEBI:17754"/>
    </ligand>
</feature>
<feature type="binding site" evidence="1">
    <location>
        <position position="83"/>
    </location>
    <ligand>
        <name>sn-glycerol 3-phosphate</name>
        <dbReference type="ChEBI" id="CHEBI:57597"/>
    </ligand>
</feature>
<feature type="binding site" evidence="1">
    <location>
        <position position="84"/>
    </location>
    <ligand>
        <name>glycerol</name>
        <dbReference type="ChEBI" id="CHEBI:17754"/>
    </ligand>
</feature>
<feature type="binding site" evidence="1">
    <location>
        <position position="84"/>
    </location>
    <ligand>
        <name>sn-glycerol 3-phosphate</name>
        <dbReference type="ChEBI" id="CHEBI:57597"/>
    </ligand>
</feature>
<feature type="binding site" evidence="1">
    <location>
        <position position="135"/>
    </location>
    <ligand>
        <name>glycerol</name>
        <dbReference type="ChEBI" id="CHEBI:17754"/>
    </ligand>
</feature>
<feature type="binding site" evidence="1">
    <location>
        <position position="135"/>
    </location>
    <ligand>
        <name>sn-glycerol 3-phosphate</name>
        <dbReference type="ChEBI" id="CHEBI:57597"/>
    </ligand>
</feature>
<feature type="binding site" evidence="1">
    <location>
        <position position="245"/>
    </location>
    <ligand>
        <name>glycerol</name>
        <dbReference type="ChEBI" id="CHEBI:17754"/>
    </ligand>
</feature>
<feature type="binding site" evidence="1">
    <location>
        <position position="245"/>
    </location>
    <ligand>
        <name>sn-glycerol 3-phosphate</name>
        <dbReference type="ChEBI" id="CHEBI:57597"/>
    </ligand>
</feature>
<feature type="binding site" evidence="1">
    <location>
        <position position="246"/>
    </location>
    <ligand>
        <name>glycerol</name>
        <dbReference type="ChEBI" id="CHEBI:17754"/>
    </ligand>
</feature>
<feature type="binding site" evidence="1">
    <location>
        <position position="267"/>
    </location>
    <ligand>
        <name>ADP</name>
        <dbReference type="ChEBI" id="CHEBI:456216"/>
    </ligand>
</feature>
<feature type="binding site" evidence="1">
    <location>
        <position position="267"/>
    </location>
    <ligand>
        <name>ATP</name>
        <dbReference type="ChEBI" id="CHEBI:30616"/>
    </ligand>
</feature>
<feature type="binding site" evidence="1">
    <location>
        <position position="310"/>
    </location>
    <ligand>
        <name>ADP</name>
        <dbReference type="ChEBI" id="CHEBI:456216"/>
    </ligand>
</feature>
<feature type="binding site" evidence="1">
    <location>
        <position position="310"/>
    </location>
    <ligand>
        <name>ATP</name>
        <dbReference type="ChEBI" id="CHEBI:30616"/>
    </ligand>
</feature>
<feature type="binding site" evidence="1">
    <location>
        <position position="314"/>
    </location>
    <ligand>
        <name>ATP</name>
        <dbReference type="ChEBI" id="CHEBI:30616"/>
    </ligand>
</feature>
<feature type="binding site" evidence="1">
    <location>
        <position position="411"/>
    </location>
    <ligand>
        <name>ADP</name>
        <dbReference type="ChEBI" id="CHEBI:456216"/>
    </ligand>
</feature>
<feature type="binding site" evidence="1">
    <location>
        <position position="411"/>
    </location>
    <ligand>
        <name>ATP</name>
        <dbReference type="ChEBI" id="CHEBI:30616"/>
    </ligand>
</feature>
<feature type="binding site" evidence="1">
    <location>
        <position position="415"/>
    </location>
    <ligand>
        <name>ADP</name>
        <dbReference type="ChEBI" id="CHEBI:456216"/>
    </ligand>
</feature>
<gene>
    <name evidence="1" type="primary">glpK</name>
    <name type="ordered locus">Smlt4125</name>
</gene>
<name>GLPK_STRMK</name>
<evidence type="ECO:0000255" key="1">
    <source>
        <dbReference type="HAMAP-Rule" id="MF_00186"/>
    </source>
</evidence>
<sequence>MTPRYVLAIDQGTTSSRAILFDRAGDIVGSAQREFAQIFPQPGWVEHDPREILTSVYATLTELLSREQIDPRHIAALGITNQRETTVVWDRATGQPIHNAIVWQSRQSHAICERLKCDGHEARVRERTGLLIDAYFSATKVRWILDHVEGAQQRAERGELLFGTIDSWLVWNLSGGQAHVTDYSNAARTLLFNIHTLDWDDDLLALLDIPRAMLPQVRDSSTVYAHTRPQFFFDHPIPIAGIAGDQQAALFGQACFLPGMVKNTYGTGCFMLMHTGTQAVRSRNGLLTTIAWGLDGRVEYALEGSIFIAGSVVQWLRDGLRMIERASDSQALAAQVPDSGGAYLVPAFVGLGAPYWRSDVRGAMFGLTRGTRKAHFVRAALEAMAYQTRDVLDAMQSDAGIALTELRADGGAIGNDFLAGFQADILGVPLLRPRLTETTALGAAYLAGLAVGFWSSREQIAAQWGLDRRFEPQMEVARREKLYAGWQQAVAATLAFHVD</sequence>
<comment type="function">
    <text evidence="1">Key enzyme in the regulation of glycerol uptake and metabolism. Catalyzes the phosphorylation of glycerol to yield sn-glycerol 3-phosphate.</text>
</comment>
<comment type="catalytic activity">
    <reaction evidence="1">
        <text>glycerol + ATP = sn-glycerol 3-phosphate + ADP + H(+)</text>
        <dbReference type="Rhea" id="RHEA:21644"/>
        <dbReference type="ChEBI" id="CHEBI:15378"/>
        <dbReference type="ChEBI" id="CHEBI:17754"/>
        <dbReference type="ChEBI" id="CHEBI:30616"/>
        <dbReference type="ChEBI" id="CHEBI:57597"/>
        <dbReference type="ChEBI" id="CHEBI:456216"/>
        <dbReference type="EC" id="2.7.1.30"/>
    </reaction>
</comment>
<comment type="activity regulation">
    <text evidence="1">Inhibited by fructose 1,6-bisphosphate (FBP).</text>
</comment>
<comment type="pathway">
    <text evidence="1">Polyol metabolism; glycerol degradation via glycerol kinase pathway; sn-glycerol 3-phosphate from glycerol: step 1/1.</text>
</comment>
<comment type="similarity">
    <text evidence="1">Belongs to the FGGY kinase family.</text>
</comment>
<proteinExistence type="inferred from homology"/>
<reference key="1">
    <citation type="journal article" date="2008" name="Genome Biol.">
        <title>The complete genome, comparative and functional analysis of Stenotrophomonas maltophilia reveals an organism heavily shielded by drug resistance determinants.</title>
        <authorList>
            <person name="Crossman L.C."/>
            <person name="Gould V.C."/>
            <person name="Dow J.M."/>
            <person name="Vernikos G.S."/>
            <person name="Okazaki A."/>
            <person name="Sebaihia M."/>
            <person name="Saunders D."/>
            <person name="Arrowsmith C."/>
            <person name="Carver T."/>
            <person name="Peters N."/>
            <person name="Adlem E."/>
            <person name="Kerhornou A."/>
            <person name="Lord A."/>
            <person name="Murphy L."/>
            <person name="Seeger K."/>
            <person name="Squares R."/>
            <person name="Rutter S."/>
            <person name="Quail M.A."/>
            <person name="Rajandream M.A."/>
            <person name="Harris D."/>
            <person name="Churcher C."/>
            <person name="Bentley S.D."/>
            <person name="Parkhill J."/>
            <person name="Thomson N.R."/>
            <person name="Avison M.B."/>
        </authorList>
    </citation>
    <scope>NUCLEOTIDE SEQUENCE [LARGE SCALE GENOMIC DNA]</scope>
    <source>
        <strain>K279a</strain>
    </source>
</reference>
<dbReference type="EC" id="2.7.1.30" evidence="1"/>
<dbReference type="EMBL" id="AM743169">
    <property type="protein sequence ID" value="CAQ47516.1"/>
    <property type="molecule type" value="Genomic_DNA"/>
</dbReference>
<dbReference type="RefSeq" id="WP_012481326.1">
    <property type="nucleotide sequence ID" value="NC_010943.1"/>
</dbReference>
<dbReference type="SMR" id="B2FI02"/>
<dbReference type="EnsemblBacteria" id="CAQ47516">
    <property type="protein sequence ID" value="CAQ47516"/>
    <property type="gene ID" value="Smlt4125"/>
</dbReference>
<dbReference type="KEGG" id="sml:Smlt4125"/>
<dbReference type="PATRIC" id="fig|522373.3.peg.3896"/>
<dbReference type="eggNOG" id="COG0554">
    <property type="taxonomic scope" value="Bacteria"/>
</dbReference>
<dbReference type="HOGENOM" id="CLU_009281_2_3_6"/>
<dbReference type="UniPathway" id="UPA00618">
    <property type="reaction ID" value="UER00672"/>
</dbReference>
<dbReference type="Proteomes" id="UP000008840">
    <property type="component" value="Chromosome"/>
</dbReference>
<dbReference type="GO" id="GO:0005829">
    <property type="term" value="C:cytosol"/>
    <property type="evidence" value="ECO:0007669"/>
    <property type="project" value="TreeGrafter"/>
</dbReference>
<dbReference type="GO" id="GO:0005524">
    <property type="term" value="F:ATP binding"/>
    <property type="evidence" value="ECO:0007669"/>
    <property type="project" value="UniProtKB-UniRule"/>
</dbReference>
<dbReference type="GO" id="GO:0004370">
    <property type="term" value="F:glycerol kinase activity"/>
    <property type="evidence" value="ECO:0000250"/>
    <property type="project" value="UniProtKB"/>
</dbReference>
<dbReference type="GO" id="GO:0019563">
    <property type="term" value="P:glycerol catabolic process"/>
    <property type="evidence" value="ECO:0007669"/>
    <property type="project" value="UniProtKB-UniRule"/>
</dbReference>
<dbReference type="GO" id="GO:0006071">
    <property type="term" value="P:glycerol metabolic process"/>
    <property type="evidence" value="ECO:0000250"/>
    <property type="project" value="UniProtKB"/>
</dbReference>
<dbReference type="GO" id="GO:0006072">
    <property type="term" value="P:glycerol-3-phosphate metabolic process"/>
    <property type="evidence" value="ECO:0007669"/>
    <property type="project" value="InterPro"/>
</dbReference>
<dbReference type="CDD" id="cd07786">
    <property type="entry name" value="FGGY_EcGK_like"/>
    <property type="match status" value="1"/>
</dbReference>
<dbReference type="FunFam" id="3.30.420.40:FF:000007">
    <property type="entry name" value="Glycerol kinase"/>
    <property type="match status" value="1"/>
</dbReference>
<dbReference type="FunFam" id="3.30.420.40:FF:000008">
    <property type="entry name" value="Glycerol kinase"/>
    <property type="match status" value="1"/>
</dbReference>
<dbReference type="Gene3D" id="3.30.420.40">
    <property type="match status" value="2"/>
</dbReference>
<dbReference type="HAMAP" id="MF_00186">
    <property type="entry name" value="Glycerol_kin"/>
    <property type="match status" value="1"/>
</dbReference>
<dbReference type="InterPro" id="IPR043129">
    <property type="entry name" value="ATPase_NBD"/>
</dbReference>
<dbReference type="InterPro" id="IPR000577">
    <property type="entry name" value="Carb_kinase_FGGY"/>
</dbReference>
<dbReference type="InterPro" id="IPR018483">
    <property type="entry name" value="Carb_kinase_FGGY_CS"/>
</dbReference>
<dbReference type="InterPro" id="IPR018485">
    <property type="entry name" value="FGGY_C"/>
</dbReference>
<dbReference type="InterPro" id="IPR018484">
    <property type="entry name" value="FGGY_N"/>
</dbReference>
<dbReference type="InterPro" id="IPR005999">
    <property type="entry name" value="Glycerol_kin"/>
</dbReference>
<dbReference type="NCBIfam" id="TIGR01311">
    <property type="entry name" value="glycerol_kin"/>
    <property type="match status" value="1"/>
</dbReference>
<dbReference type="NCBIfam" id="NF000756">
    <property type="entry name" value="PRK00047.1"/>
    <property type="match status" value="1"/>
</dbReference>
<dbReference type="PANTHER" id="PTHR10196:SF69">
    <property type="entry name" value="GLYCEROL KINASE"/>
    <property type="match status" value="1"/>
</dbReference>
<dbReference type="PANTHER" id="PTHR10196">
    <property type="entry name" value="SUGAR KINASE"/>
    <property type="match status" value="1"/>
</dbReference>
<dbReference type="Pfam" id="PF02782">
    <property type="entry name" value="FGGY_C"/>
    <property type="match status" value="1"/>
</dbReference>
<dbReference type="Pfam" id="PF00370">
    <property type="entry name" value="FGGY_N"/>
    <property type="match status" value="1"/>
</dbReference>
<dbReference type="PIRSF" id="PIRSF000538">
    <property type="entry name" value="GlpK"/>
    <property type="match status" value="1"/>
</dbReference>
<dbReference type="SUPFAM" id="SSF53067">
    <property type="entry name" value="Actin-like ATPase domain"/>
    <property type="match status" value="2"/>
</dbReference>
<dbReference type="PROSITE" id="PS00933">
    <property type="entry name" value="FGGY_KINASES_1"/>
    <property type="match status" value="1"/>
</dbReference>
<dbReference type="PROSITE" id="PS00445">
    <property type="entry name" value="FGGY_KINASES_2"/>
    <property type="match status" value="1"/>
</dbReference>